<proteinExistence type="inferred from homology"/>
<evidence type="ECO:0000255" key="1">
    <source>
        <dbReference type="HAMAP-Rule" id="MF_00184"/>
    </source>
</evidence>
<evidence type="ECO:0000255" key="2">
    <source>
        <dbReference type="PROSITE-ProRule" id="PRU01228"/>
    </source>
</evidence>
<keyword id="KW-0030">Aminoacyl-tRNA synthetase</keyword>
<keyword id="KW-0067">ATP-binding</keyword>
<keyword id="KW-0963">Cytoplasm</keyword>
<keyword id="KW-0436">Ligase</keyword>
<keyword id="KW-0479">Metal-binding</keyword>
<keyword id="KW-0547">Nucleotide-binding</keyword>
<keyword id="KW-0648">Protein biosynthesis</keyword>
<keyword id="KW-0694">RNA-binding</keyword>
<keyword id="KW-0820">tRNA-binding</keyword>
<keyword id="KW-0862">Zinc</keyword>
<sequence length="640" mass="73259">MKITFPDGAVKEFEPGVSTADIAASISPGLKKKALAGKLNGELLDLVTPIHEDGAIEIVTPDHEDALGILRHSTAHLMAQALKRLYPDVKFGVGPAIESGFYYDIDTEAVISDESLVEIEKEMQKIVRENVPIEREVVSREEAIKRFKAIGDQYKLELIEAIPKDETVTIYTQGEFFDLCRGVHVPSTGKIQVFKLLSVAGAYWRGDSNNKMLQRIYGTAFFDKNGLKEFIQMQKEAKERDHRKLGKELELFTNSIEVGQGLPLWLPKGATIRRVIERYIVDKEERLGYNHVYTPIMANVELYKTSGHWDHYHEDMFPTMKMDNEELVLRPMNCPHHMMIYKNDIHSYRELPIRIAELGMMHRYEMSGALSGLQRVRGMTLNDAHVFVRPDQIKDEFKRVVELILEVYKDFDIKDYSFRLSYRDPKNTEKYFDDDAMWEKAQAMLKSAMDEMGMDYFEAEGEAAFYGPKLDVQVKTAIGKEETLSTVQLDFLLPERFDLTYIGEDGEKHRPVVIHRGVVSTMERFVAYLIEEYKGAFPTWLAPVQMELIPVNADAHLDYSKGVQDKLQRAGLRSEVDDRNEKLGYKIREAQTKKIPYALVLGDQEMEAGSVNVRRYGSKDSETMDLDAFIAQVVAEVSKY</sequence>
<dbReference type="EC" id="6.1.1.3" evidence="1"/>
<dbReference type="EMBL" id="AM263198">
    <property type="protein sequence ID" value="CAK20990.1"/>
    <property type="molecule type" value="Genomic_DNA"/>
</dbReference>
<dbReference type="RefSeq" id="WP_011702358.1">
    <property type="nucleotide sequence ID" value="NC_008555.1"/>
</dbReference>
<dbReference type="SMR" id="A0AJ08"/>
<dbReference type="STRING" id="386043.lwe1572"/>
<dbReference type="GeneID" id="61189449"/>
<dbReference type="KEGG" id="lwe:lwe1572"/>
<dbReference type="eggNOG" id="COG0441">
    <property type="taxonomic scope" value="Bacteria"/>
</dbReference>
<dbReference type="HOGENOM" id="CLU_008554_0_1_9"/>
<dbReference type="OrthoDB" id="9802304at2"/>
<dbReference type="Proteomes" id="UP000000779">
    <property type="component" value="Chromosome"/>
</dbReference>
<dbReference type="GO" id="GO:0005737">
    <property type="term" value="C:cytoplasm"/>
    <property type="evidence" value="ECO:0007669"/>
    <property type="project" value="UniProtKB-SubCell"/>
</dbReference>
<dbReference type="GO" id="GO:0005524">
    <property type="term" value="F:ATP binding"/>
    <property type="evidence" value="ECO:0007669"/>
    <property type="project" value="UniProtKB-UniRule"/>
</dbReference>
<dbReference type="GO" id="GO:0140096">
    <property type="term" value="F:catalytic activity, acting on a protein"/>
    <property type="evidence" value="ECO:0007669"/>
    <property type="project" value="UniProtKB-ARBA"/>
</dbReference>
<dbReference type="GO" id="GO:0046872">
    <property type="term" value="F:metal ion binding"/>
    <property type="evidence" value="ECO:0007669"/>
    <property type="project" value="UniProtKB-KW"/>
</dbReference>
<dbReference type="GO" id="GO:0004829">
    <property type="term" value="F:threonine-tRNA ligase activity"/>
    <property type="evidence" value="ECO:0007669"/>
    <property type="project" value="UniProtKB-UniRule"/>
</dbReference>
<dbReference type="GO" id="GO:0016740">
    <property type="term" value="F:transferase activity"/>
    <property type="evidence" value="ECO:0007669"/>
    <property type="project" value="UniProtKB-ARBA"/>
</dbReference>
<dbReference type="GO" id="GO:0000049">
    <property type="term" value="F:tRNA binding"/>
    <property type="evidence" value="ECO:0007669"/>
    <property type="project" value="UniProtKB-KW"/>
</dbReference>
<dbReference type="GO" id="GO:0006435">
    <property type="term" value="P:threonyl-tRNA aminoacylation"/>
    <property type="evidence" value="ECO:0007669"/>
    <property type="project" value="UniProtKB-UniRule"/>
</dbReference>
<dbReference type="CDD" id="cd01667">
    <property type="entry name" value="TGS_ThrRS"/>
    <property type="match status" value="1"/>
</dbReference>
<dbReference type="CDD" id="cd00860">
    <property type="entry name" value="ThrRS_anticodon"/>
    <property type="match status" value="1"/>
</dbReference>
<dbReference type="CDD" id="cd00771">
    <property type="entry name" value="ThrRS_core"/>
    <property type="match status" value="1"/>
</dbReference>
<dbReference type="FunFam" id="3.10.20.30:FF:000005">
    <property type="entry name" value="Threonine--tRNA ligase"/>
    <property type="match status" value="1"/>
</dbReference>
<dbReference type="FunFam" id="3.30.54.20:FF:000002">
    <property type="entry name" value="Threonine--tRNA ligase"/>
    <property type="match status" value="1"/>
</dbReference>
<dbReference type="FunFam" id="3.30.930.10:FF:000002">
    <property type="entry name" value="Threonine--tRNA ligase"/>
    <property type="match status" value="1"/>
</dbReference>
<dbReference type="FunFam" id="3.40.50.800:FF:000001">
    <property type="entry name" value="Threonine--tRNA ligase"/>
    <property type="match status" value="1"/>
</dbReference>
<dbReference type="FunFam" id="3.30.980.10:FF:000005">
    <property type="entry name" value="Threonyl-tRNA synthetase, mitochondrial"/>
    <property type="match status" value="1"/>
</dbReference>
<dbReference type="Gene3D" id="3.10.20.30">
    <property type="match status" value="1"/>
</dbReference>
<dbReference type="Gene3D" id="3.30.54.20">
    <property type="match status" value="1"/>
</dbReference>
<dbReference type="Gene3D" id="3.40.50.800">
    <property type="entry name" value="Anticodon-binding domain"/>
    <property type="match status" value="1"/>
</dbReference>
<dbReference type="Gene3D" id="3.30.930.10">
    <property type="entry name" value="Bira Bifunctional Protein, Domain 2"/>
    <property type="match status" value="1"/>
</dbReference>
<dbReference type="Gene3D" id="3.30.980.10">
    <property type="entry name" value="Threonyl-trna Synthetase, Chain A, domain 2"/>
    <property type="match status" value="1"/>
</dbReference>
<dbReference type="HAMAP" id="MF_00184">
    <property type="entry name" value="Thr_tRNA_synth"/>
    <property type="match status" value="1"/>
</dbReference>
<dbReference type="InterPro" id="IPR002314">
    <property type="entry name" value="aa-tRNA-synt_IIb"/>
</dbReference>
<dbReference type="InterPro" id="IPR006195">
    <property type="entry name" value="aa-tRNA-synth_II"/>
</dbReference>
<dbReference type="InterPro" id="IPR045864">
    <property type="entry name" value="aa-tRNA-synth_II/BPL/LPL"/>
</dbReference>
<dbReference type="InterPro" id="IPR004154">
    <property type="entry name" value="Anticodon-bd"/>
</dbReference>
<dbReference type="InterPro" id="IPR036621">
    <property type="entry name" value="Anticodon-bd_dom_sf"/>
</dbReference>
<dbReference type="InterPro" id="IPR012675">
    <property type="entry name" value="Beta-grasp_dom_sf"/>
</dbReference>
<dbReference type="InterPro" id="IPR004095">
    <property type="entry name" value="TGS"/>
</dbReference>
<dbReference type="InterPro" id="IPR012676">
    <property type="entry name" value="TGS-like"/>
</dbReference>
<dbReference type="InterPro" id="IPR002320">
    <property type="entry name" value="Thr-tRNA-ligase_IIa"/>
</dbReference>
<dbReference type="InterPro" id="IPR018163">
    <property type="entry name" value="Thr/Ala-tRNA-synth_IIc_edit"/>
</dbReference>
<dbReference type="InterPro" id="IPR047246">
    <property type="entry name" value="ThrRS_anticodon"/>
</dbReference>
<dbReference type="InterPro" id="IPR033728">
    <property type="entry name" value="ThrRS_core"/>
</dbReference>
<dbReference type="InterPro" id="IPR012947">
    <property type="entry name" value="tRNA_SAD"/>
</dbReference>
<dbReference type="NCBIfam" id="TIGR00418">
    <property type="entry name" value="thrS"/>
    <property type="match status" value="1"/>
</dbReference>
<dbReference type="PANTHER" id="PTHR11451:SF56">
    <property type="entry name" value="THREONINE--TRNA LIGASE 1"/>
    <property type="match status" value="1"/>
</dbReference>
<dbReference type="PANTHER" id="PTHR11451">
    <property type="entry name" value="THREONINE-TRNA LIGASE"/>
    <property type="match status" value="1"/>
</dbReference>
<dbReference type="Pfam" id="PF03129">
    <property type="entry name" value="HGTP_anticodon"/>
    <property type="match status" value="1"/>
</dbReference>
<dbReference type="Pfam" id="PF02824">
    <property type="entry name" value="TGS"/>
    <property type="match status" value="1"/>
</dbReference>
<dbReference type="Pfam" id="PF00587">
    <property type="entry name" value="tRNA-synt_2b"/>
    <property type="match status" value="1"/>
</dbReference>
<dbReference type="Pfam" id="PF07973">
    <property type="entry name" value="tRNA_SAD"/>
    <property type="match status" value="1"/>
</dbReference>
<dbReference type="PRINTS" id="PR01047">
    <property type="entry name" value="TRNASYNTHTHR"/>
</dbReference>
<dbReference type="SMART" id="SM00863">
    <property type="entry name" value="tRNA_SAD"/>
    <property type="match status" value="1"/>
</dbReference>
<dbReference type="SUPFAM" id="SSF52954">
    <property type="entry name" value="Class II aaRS ABD-related"/>
    <property type="match status" value="1"/>
</dbReference>
<dbReference type="SUPFAM" id="SSF55681">
    <property type="entry name" value="Class II aaRS and biotin synthetases"/>
    <property type="match status" value="1"/>
</dbReference>
<dbReference type="SUPFAM" id="SSF81271">
    <property type="entry name" value="TGS-like"/>
    <property type="match status" value="1"/>
</dbReference>
<dbReference type="SUPFAM" id="SSF55186">
    <property type="entry name" value="ThrRS/AlaRS common domain"/>
    <property type="match status" value="1"/>
</dbReference>
<dbReference type="PROSITE" id="PS50862">
    <property type="entry name" value="AA_TRNA_LIGASE_II"/>
    <property type="match status" value="1"/>
</dbReference>
<dbReference type="PROSITE" id="PS51880">
    <property type="entry name" value="TGS"/>
    <property type="match status" value="1"/>
</dbReference>
<organism>
    <name type="scientific">Listeria welshimeri serovar 6b (strain ATCC 35897 / DSM 20650 / CCUG 15529 / CIP 8149 / NCTC 11857 / SLCC 5334 / V8)</name>
    <dbReference type="NCBI Taxonomy" id="386043"/>
    <lineage>
        <taxon>Bacteria</taxon>
        <taxon>Bacillati</taxon>
        <taxon>Bacillota</taxon>
        <taxon>Bacilli</taxon>
        <taxon>Bacillales</taxon>
        <taxon>Listeriaceae</taxon>
        <taxon>Listeria</taxon>
    </lineage>
</organism>
<reference key="1">
    <citation type="journal article" date="2006" name="J. Bacteriol.">
        <title>Whole-genome sequence of Listeria welshimeri reveals common steps in genome reduction with Listeria innocua as compared to Listeria monocytogenes.</title>
        <authorList>
            <person name="Hain T."/>
            <person name="Steinweg C."/>
            <person name="Kuenne C.T."/>
            <person name="Billion A."/>
            <person name="Ghai R."/>
            <person name="Chatterjee S.S."/>
            <person name="Domann E."/>
            <person name="Kaerst U."/>
            <person name="Goesmann A."/>
            <person name="Bekel T."/>
            <person name="Bartels D."/>
            <person name="Kaiser O."/>
            <person name="Meyer F."/>
            <person name="Puehler A."/>
            <person name="Weisshaar B."/>
            <person name="Wehland J."/>
            <person name="Liang C."/>
            <person name="Dandekar T."/>
            <person name="Lampidis R."/>
            <person name="Kreft J."/>
            <person name="Goebel W."/>
            <person name="Chakraborty T."/>
        </authorList>
    </citation>
    <scope>NUCLEOTIDE SEQUENCE [LARGE SCALE GENOMIC DNA]</scope>
    <source>
        <strain>ATCC 35897 / DSM 20650 / CCUG 15529 / CIP 8149 / NCTC 11857 / SLCC 5334 / V8</strain>
    </source>
</reference>
<protein>
    <recommendedName>
        <fullName evidence="1">Threonine--tRNA ligase</fullName>
        <ecNumber evidence="1">6.1.1.3</ecNumber>
    </recommendedName>
    <alternativeName>
        <fullName evidence="1">Threonyl-tRNA synthetase</fullName>
        <shortName evidence="1">ThrRS</shortName>
    </alternativeName>
</protein>
<comment type="function">
    <text evidence="1">Catalyzes the attachment of threonine to tRNA(Thr) in a two-step reaction: L-threonine is first activated by ATP to form Thr-AMP and then transferred to the acceptor end of tRNA(Thr). Also edits incorrectly charged L-seryl-tRNA(Thr).</text>
</comment>
<comment type="catalytic activity">
    <reaction evidence="1">
        <text>tRNA(Thr) + L-threonine + ATP = L-threonyl-tRNA(Thr) + AMP + diphosphate + H(+)</text>
        <dbReference type="Rhea" id="RHEA:24624"/>
        <dbReference type="Rhea" id="RHEA-COMP:9670"/>
        <dbReference type="Rhea" id="RHEA-COMP:9704"/>
        <dbReference type="ChEBI" id="CHEBI:15378"/>
        <dbReference type="ChEBI" id="CHEBI:30616"/>
        <dbReference type="ChEBI" id="CHEBI:33019"/>
        <dbReference type="ChEBI" id="CHEBI:57926"/>
        <dbReference type="ChEBI" id="CHEBI:78442"/>
        <dbReference type="ChEBI" id="CHEBI:78534"/>
        <dbReference type="ChEBI" id="CHEBI:456215"/>
        <dbReference type="EC" id="6.1.1.3"/>
    </reaction>
</comment>
<comment type="cofactor">
    <cofactor evidence="1">
        <name>Zn(2+)</name>
        <dbReference type="ChEBI" id="CHEBI:29105"/>
    </cofactor>
    <text evidence="1">Binds 1 zinc ion per subunit.</text>
</comment>
<comment type="subunit">
    <text evidence="1">Homodimer.</text>
</comment>
<comment type="subcellular location">
    <subcellularLocation>
        <location evidence="1">Cytoplasm</location>
    </subcellularLocation>
</comment>
<comment type="similarity">
    <text evidence="1">Belongs to the class-II aminoacyl-tRNA synthetase family.</text>
</comment>
<name>SYT_LISW6</name>
<accession>A0AJ08</accession>
<feature type="chain" id="PRO_1000020419" description="Threonine--tRNA ligase">
    <location>
        <begin position="1"/>
        <end position="640"/>
    </location>
</feature>
<feature type="domain" description="TGS" evidence="2">
    <location>
        <begin position="1"/>
        <end position="60"/>
    </location>
</feature>
<feature type="region of interest" description="Catalytic" evidence="1">
    <location>
        <begin position="241"/>
        <end position="538"/>
    </location>
</feature>
<feature type="binding site" evidence="1">
    <location>
        <position position="334"/>
    </location>
    <ligand>
        <name>Zn(2+)</name>
        <dbReference type="ChEBI" id="CHEBI:29105"/>
    </ligand>
</feature>
<feature type="binding site" evidence="1">
    <location>
        <position position="385"/>
    </location>
    <ligand>
        <name>Zn(2+)</name>
        <dbReference type="ChEBI" id="CHEBI:29105"/>
    </ligand>
</feature>
<feature type="binding site" evidence="1">
    <location>
        <position position="515"/>
    </location>
    <ligand>
        <name>Zn(2+)</name>
        <dbReference type="ChEBI" id="CHEBI:29105"/>
    </ligand>
</feature>
<gene>
    <name evidence="1" type="primary">thrS</name>
    <name type="ordered locus">lwe1572</name>
</gene>